<protein>
    <recommendedName>
        <fullName>Toxin YoeB</fullName>
        <ecNumber>3.1.-.-</ecNumber>
    </recommendedName>
    <alternativeName>
        <fullName>Endoribonuclease YoeB</fullName>
    </alternativeName>
    <alternativeName>
        <fullName>Putative mRNA interferase YoeB</fullName>
    </alternativeName>
</protein>
<accession>Q9Z4V8</accession>
<organism>
    <name type="scientific">Streptomyces coelicolor (strain ATCC BAA-471 / A3(2) / M145)</name>
    <dbReference type="NCBI Taxonomy" id="100226"/>
    <lineage>
        <taxon>Bacteria</taxon>
        <taxon>Bacillati</taxon>
        <taxon>Actinomycetota</taxon>
        <taxon>Actinomycetes</taxon>
        <taxon>Kitasatosporales</taxon>
        <taxon>Streptomycetaceae</taxon>
        <taxon>Streptomyces</taxon>
        <taxon>Streptomyces albidoflavus group</taxon>
    </lineage>
</organism>
<evidence type="ECO:0000250" key="1"/>
<evidence type="ECO:0000305" key="2"/>
<dbReference type="EC" id="3.1.-.-"/>
<dbReference type="EMBL" id="Y17736">
    <property type="protein sequence ID" value="CAB38326.1"/>
    <property type="molecule type" value="Genomic_DNA"/>
</dbReference>
<dbReference type="EMBL" id="AL939111">
    <property type="protein sequence ID" value="CAC37262.1"/>
    <property type="molecule type" value="Genomic_DNA"/>
</dbReference>
<dbReference type="PIR" id="T51757">
    <property type="entry name" value="T51757"/>
</dbReference>
<dbReference type="RefSeq" id="NP_626486.1">
    <property type="nucleotide sequence ID" value="NC_003888.3"/>
</dbReference>
<dbReference type="RefSeq" id="WP_003976577.1">
    <property type="nucleotide sequence ID" value="NZ_VNID01000001.1"/>
</dbReference>
<dbReference type="SMR" id="Q9Z4V8"/>
<dbReference type="FunCoup" id="Q9Z4V8">
    <property type="interactions" value="1"/>
</dbReference>
<dbReference type="STRING" id="100226.gene:17759833"/>
<dbReference type="PaxDb" id="100226-SCO2236"/>
<dbReference type="KEGG" id="sco:SCO2236"/>
<dbReference type="PATRIC" id="fig|100226.15.peg.2274"/>
<dbReference type="eggNOG" id="COG4115">
    <property type="taxonomic scope" value="Bacteria"/>
</dbReference>
<dbReference type="HOGENOM" id="CLU_169492_2_2_11"/>
<dbReference type="InParanoid" id="Q9Z4V8"/>
<dbReference type="OrthoDB" id="9801102at2"/>
<dbReference type="PhylomeDB" id="Q9Z4V8"/>
<dbReference type="Proteomes" id="UP000001973">
    <property type="component" value="Chromosome"/>
</dbReference>
<dbReference type="GO" id="GO:0004519">
    <property type="term" value="F:endonuclease activity"/>
    <property type="evidence" value="ECO:0000318"/>
    <property type="project" value="GO_Central"/>
</dbReference>
<dbReference type="GO" id="GO:0003723">
    <property type="term" value="F:RNA binding"/>
    <property type="evidence" value="ECO:0007669"/>
    <property type="project" value="UniProtKB-KW"/>
</dbReference>
<dbReference type="GO" id="GO:0045892">
    <property type="term" value="P:negative regulation of DNA-templated transcription"/>
    <property type="evidence" value="ECO:0000318"/>
    <property type="project" value="GO_Central"/>
</dbReference>
<dbReference type="GO" id="GO:0006401">
    <property type="term" value="P:RNA catabolic process"/>
    <property type="evidence" value="ECO:0007669"/>
    <property type="project" value="InterPro"/>
</dbReference>
<dbReference type="FunFam" id="3.30.2310.20:FF:000001">
    <property type="entry name" value="Addiction module toxin, Txe/YoeB family"/>
    <property type="match status" value="1"/>
</dbReference>
<dbReference type="Gene3D" id="3.30.2310.20">
    <property type="entry name" value="RelE-like"/>
    <property type="match status" value="1"/>
</dbReference>
<dbReference type="InterPro" id="IPR035093">
    <property type="entry name" value="RelE/ParE_toxin_dom_sf"/>
</dbReference>
<dbReference type="InterPro" id="IPR009614">
    <property type="entry name" value="YoeB_toxin"/>
</dbReference>
<dbReference type="NCBIfam" id="TIGR02116">
    <property type="entry name" value="toxin_Txe_YoeB"/>
    <property type="match status" value="1"/>
</dbReference>
<dbReference type="PANTHER" id="PTHR38039">
    <property type="entry name" value="TOXIN YOEB"/>
    <property type="match status" value="1"/>
</dbReference>
<dbReference type="PANTHER" id="PTHR38039:SF1">
    <property type="entry name" value="TOXIN YOEB"/>
    <property type="match status" value="1"/>
</dbReference>
<dbReference type="Pfam" id="PF06769">
    <property type="entry name" value="YoeB_toxin"/>
    <property type="match status" value="1"/>
</dbReference>
<dbReference type="SUPFAM" id="SSF143011">
    <property type="entry name" value="RelE-like"/>
    <property type="match status" value="1"/>
</dbReference>
<proteinExistence type="inferred from homology"/>
<keyword id="KW-0255">Endonuclease</keyword>
<keyword id="KW-0378">Hydrolase</keyword>
<keyword id="KW-0540">Nuclease</keyword>
<keyword id="KW-1185">Reference proteome</keyword>
<keyword id="KW-0694">RNA-binding</keyword>
<keyword id="KW-1277">Toxin-antitoxin system</keyword>
<feature type="chain" id="PRO_0000404327" description="Toxin YoeB">
    <location>
        <begin position="1"/>
        <end position="84"/>
    </location>
</feature>
<feature type="active site" description="Proton acceptor" evidence="1">
    <location>
        <position position="46"/>
    </location>
</feature>
<feature type="active site" description="Proton donor" evidence="1">
    <location>
        <position position="83"/>
    </location>
</feature>
<name>YOEB_STRCO</name>
<reference key="1">
    <citation type="journal article" date="1999" name="Microbiology">
        <title>Nitrogen metabolism in Streptomyces coelicolor A3(2): modification of glutamine synthetase I by an adenylyltransferase.</title>
        <authorList>
            <person name="Fink D."/>
            <person name="Falke D."/>
            <person name="Wohlleben W."/>
            <person name="Engels A."/>
        </authorList>
    </citation>
    <scope>NUCLEOTIDE SEQUENCE [GENOMIC DNA]</scope>
    <source>
        <strain>A3(2) / NRRL B-16638</strain>
    </source>
</reference>
<reference key="2">
    <citation type="journal article" date="2002" name="Nature">
        <title>Complete genome sequence of the model actinomycete Streptomyces coelicolor A3(2).</title>
        <authorList>
            <person name="Bentley S.D."/>
            <person name="Chater K.F."/>
            <person name="Cerdeno-Tarraga A.-M."/>
            <person name="Challis G.L."/>
            <person name="Thomson N.R."/>
            <person name="James K.D."/>
            <person name="Harris D.E."/>
            <person name="Quail M.A."/>
            <person name="Kieser H."/>
            <person name="Harper D."/>
            <person name="Bateman A."/>
            <person name="Brown S."/>
            <person name="Chandra G."/>
            <person name="Chen C.W."/>
            <person name="Collins M."/>
            <person name="Cronin A."/>
            <person name="Fraser A."/>
            <person name="Goble A."/>
            <person name="Hidalgo J."/>
            <person name="Hornsby T."/>
            <person name="Howarth S."/>
            <person name="Huang C.-H."/>
            <person name="Kieser T."/>
            <person name="Larke L."/>
            <person name="Murphy L.D."/>
            <person name="Oliver K."/>
            <person name="O'Neil S."/>
            <person name="Rabbinowitsch E."/>
            <person name="Rajandream M.A."/>
            <person name="Rutherford K.M."/>
            <person name="Rutter S."/>
            <person name="Seeger K."/>
            <person name="Saunders D."/>
            <person name="Sharp S."/>
            <person name="Squares R."/>
            <person name="Squares S."/>
            <person name="Taylor K."/>
            <person name="Warren T."/>
            <person name="Wietzorrek A."/>
            <person name="Woodward J.R."/>
            <person name="Barrell B.G."/>
            <person name="Parkhill J."/>
            <person name="Hopwood D.A."/>
        </authorList>
    </citation>
    <scope>NUCLEOTIDE SEQUENCE [LARGE SCALE GENOMIC DNA]</scope>
    <source>
        <strain>ATCC BAA-471 / A3(2) / M145</strain>
    </source>
</reference>
<gene>
    <name type="primary">yoeB</name>
    <name type="ordered locus">SCO2236</name>
    <name type="ORF">SCBAC17D6.03</name>
</gene>
<sequence length="84" mass="9986">MRITFTSHGWEDYVHWAESDRKVTKRINRLIADIARDPFKGVGKPEPLKGDLSGYWSRRIDDTHRLVYKPTDDQLVIVQARYHY</sequence>
<comment type="function">
    <text evidence="1">Toxic component of a type II toxin-antitoxin (TA) system. Has RNase activity and preferentially cleaves at the 3'-end of purine ribonucleotides (By similarity).</text>
</comment>
<comment type="subunit">
    <text evidence="1">Forms a complex with YefM which inhibits its toxin activity.</text>
</comment>
<comment type="similarity">
    <text evidence="2">Belongs to the YoeB family.</text>
</comment>